<feature type="chain" id="PRO_0000438377" description="Ricin B-like lectin R40C1">
    <location>
        <begin position="1"/>
        <end position="348"/>
    </location>
</feature>
<feature type="domain" description="Ricin B-type lectin" evidence="2">
    <location>
        <begin position="199"/>
        <end position="345"/>
    </location>
</feature>
<feature type="region of interest" description="Disordered" evidence="3">
    <location>
        <begin position="1"/>
        <end position="26"/>
    </location>
</feature>
<name>40C1_ORYSJ</name>
<gene>
    <name evidence="6" type="primary">R40C1</name>
    <name evidence="9" type="ordered locus">Os03g0327600</name>
    <name evidence="8" type="ordered locus">LOC_Os03g21040</name>
    <name evidence="7" type="ORF">OSJNBb0014I10.3</name>
</gene>
<accession>Q10M12</accession>
<accession>Q40705</accession>
<accession>Q8H7M3</accession>
<proteinExistence type="evidence at protein level"/>
<organism>
    <name type="scientific">Oryza sativa subsp. japonica</name>
    <name type="common">Rice</name>
    <dbReference type="NCBI Taxonomy" id="39947"/>
    <lineage>
        <taxon>Eukaryota</taxon>
        <taxon>Viridiplantae</taxon>
        <taxon>Streptophyta</taxon>
        <taxon>Embryophyta</taxon>
        <taxon>Tracheophyta</taxon>
        <taxon>Spermatophyta</taxon>
        <taxon>Magnoliopsida</taxon>
        <taxon>Liliopsida</taxon>
        <taxon>Poales</taxon>
        <taxon>Poaceae</taxon>
        <taxon>BOP clade</taxon>
        <taxon>Oryzoideae</taxon>
        <taxon>Oryzeae</taxon>
        <taxon>Oryzinae</taxon>
        <taxon>Oryza</taxon>
        <taxon>Oryza sativa</taxon>
    </lineage>
</organism>
<comment type="function">
    <text evidence="1">Lectin which binds carbohydrates in vitro. Interacts through its lectin domain with glycan structures containing specific motifs.</text>
</comment>
<comment type="tissue specificity">
    <text evidence="4">Expressed in roots and shoots.</text>
</comment>
<comment type="induction">
    <text evidence="4">Induced by abscisic acid (ABA) and salt stress in roots.</text>
</comment>
<comment type="domain">
    <text evidence="1">The ricin B-type lectin domain binds glycan structures.</text>
</comment>
<comment type="sequence caution" evidence="6">
    <conflict type="erroneous gene model prediction">
        <sequence resource="EMBL-CDS" id="AAN64997"/>
    </conflict>
</comment>
<keyword id="KW-0430">Lectin</keyword>
<keyword id="KW-1185">Reference proteome</keyword>
<reference key="1">
    <citation type="journal article" date="1997" name="Planta">
        <title>An abscisic-acid- and salt-stress-responsive rice cDNA from a novel plant gene family.</title>
        <authorList>
            <person name="Moons A."/>
            <person name="Gielen J."/>
            <person name="Vandekerckhove J."/>
            <person name="Van der Straeten D."/>
            <person name="Gheysen G."/>
            <person name="Van Montagu M."/>
        </authorList>
    </citation>
    <scope>NUCLEOTIDE SEQUENCE [MRNA]</scope>
    <scope>IDENTIFICATION BY MASS SPECTROMETRY</scope>
    <scope>TISSUE SPECIFICITY</scope>
    <scope>INDUCTION</scope>
    <source>
        <tissue>Root</tissue>
    </source>
</reference>
<reference key="2">
    <citation type="journal article" date="2005" name="Genome Res.">
        <title>Sequence, annotation, and analysis of synteny between rice chromosome 3 and diverged grass species.</title>
        <authorList>
            <consortium name="The rice chromosome 3 sequencing consortium"/>
            <person name="Buell C.R."/>
            <person name="Yuan Q."/>
            <person name="Ouyang S."/>
            <person name="Liu J."/>
            <person name="Zhu W."/>
            <person name="Wang A."/>
            <person name="Maiti R."/>
            <person name="Haas B."/>
            <person name="Wortman J."/>
            <person name="Pertea M."/>
            <person name="Jones K.M."/>
            <person name="Kim M."/>
            <person name="Overton L."/>
            <person name="Tsitrin T."/>
            <person name="Fadrosh D."/>
            <person name="Bera J."/>
            <person name="Weaver B."/>
            <person name="Jin S."/>
            <person name="Johri S."/>
            <person name="Reardon M."/>
            <person name="Webb K."/>
            <person name="Hill J."/>
            <person name="Moffat K."/>
            <person name="Tallon L."/>
            <person name="Van Aken S."/>
            <person name="Lewis M."/>
            <person name="Utterback T."/>
            <person name="Feldblyum T."/>
            <person name="Zismann V."/>
            <person name="Iobst S."/>
            <person name="Hsiao J."/>
            <person name="de Vazeille A.R."/>
            <person name="Salzberg S.L."/>
            <person name="White O."/>
            <person name="Fraser C.M."/>
            <person name="Yu Y."/>
            <person name="Kim H."/>
            <person name="Rambo T."/>
            <person name="Currie J."/>
            <person name="Collura K."/>
            <person name="Kernodle-Thompson S."/>
            <person name="Wei F."/>
            <person name="Kudrna K."/>
            <person name="Ammiraju J.S.S."/>
            <person name="Luo M."/>
            <person name="Goicoechea J.L."/>
            <person name="Wing R.A."/>
            <person name="Henry D."/>
            <person name="Oates R."/>
            <person name="Palmer M."/>
            <person name="Pries G."/>
            <person name="Saski C."/>
            <person name="Simmons J."/>
            <person name="Soderlund C."/>
            <person name="Nelson W."/>
            <person name="de la Bastide M."/>
            <person name="Spiegel L."/>
            <person name="Nascimento L."/>
            <person name="Huang E."/>
            <person name="Preston R."/>
            <person name="Zutavern T."/>
            <person name="Palmer L."/>
            <person name="O'Shaughnessy A."/>
            <person name="Dike S."/>
            <person name="McCombie W.R."/>
            <person name="Minx P."/>
            <person name="Cordum H."/>
            <person name="Wilson R."/>
            <person name="Jin W."/>
            <person name="Lee H.R."/>
            <person name="Jiang J."/>
            <person name="Jackson S."/>
        </authorList>
    </citation>
    <scope>NUCLEOTIDE SEQUENCE [LARGE SCALE GENOMIC DNA]</scope>
    <source>
        <strain>cv. Nipponbare</strain>
    </source>
</reference>
<reference key="3">
    <citation type="journal article" date="2005" name="Nature">
        <title>The map-based sequence of the rice genome.</title>
        <authorList>
            <consortium name="International rice genome sequencing project (IRGSP)"/>
        </authorList>
    </citation>
    <scope>NUCLEOTIDE SEQUENCE [LARGE SCALE GENOMIC DNA]</scope>
    <source>
        <strain>cv. Nipponbare</strain>
    </source>
</reference>
<reference key="4">
    <citation type="journal article" date="2008" name="Nucleic Acids Res.">
        <title>The rice annotation project database (RAP-DB): 2008 update.</title>
        <authorList>
            <consortium name="The rice annotation project (RAP)"/>
        </authorList>
    </citation>
    <scope>GENOME REANNOTATION</scope>
    <source>
        <strain>cv. Nipponbare</strain>
    </source>
</reference>
<reference key="5">
    <citation type="journal article" date="2013" name="Rice">
        <title>Improvement of the Oryza sativa Nipponbare reference genome using next generation sequence and optical map data.</title>
        <authorList>
            <person name="Kawahara Y."/>
            <person name="de la Bastide M."/>
            <person name="Hamilton J.P."/>
            <person name="Kanamori H."/>
            <person name="McCombie W.R."/>
            <person name="Ouyang S."/>
            <person name="Schwartz D.C."/>
            <person name="Tanaka T."/>
            <person name="Wu J."/>
            <person name="Zhou S."/>
            <person name="Childs K.L."/>
            <person name="Davidson R.M."/>
            <person name="Lin H."/>
            <person name="Quesada-Ocampo L."/>
            <person name="Vaillancourt B."/>
            <person name="Sakai H."/>
            <person name="Lee S.S."/>
            <person name="Kim J."/>
            <person name="Numa H."/>
            <person name="Itoh T."/>
            <person name="Buell C.R."/>
            <person name="Matsumoto T."/>
        </authorList>
    </citation>
    <scope>GENOME REANNOTATION</scope>
    <source>
        <strain>cv. Nipponbare</strain>
    </source>
</reference>
<reference key="6">
    <citation type="journal article" date="2003" name="Science">
        <title>Collection, mapping, and annotation of over 28,000 cDNA clones from japonica rice.</title>
        <authorList>
            <consortium name="The rice full-length cDNA consortium"/>
        </authorList>
    </citation>
    <scope>NUCLEOTIDE SEQUENCE [LARGE SCALE MRNA]</scope>
    <source>
        <strain>cv. Nipponbare</strain>
    </source>
</reference>
<sequence length="348" mass="38822">MFGFGHHGHHGQDQPPQHHGGGGGGAHQPTFKIFCRADEGYCVAVREGNVVLAPTNPRDEHQHWYKDMRFSAKIKDEEGNPAFALVNKATGLAIKHSLGQGHPVKLAPFNPEYPDESVLWTESGDVGKSFRCIRMLNNIRLNFDAFHGDKDHGGVHDGTTIVLWEWAKGDNQCWKILPWGDEAYAGGSANAPRGGNEPTVRIFCKADEGFSVTVRGGSVCLAPTNPRDEYQHWIKDMRHSNSIKDEEGYPAFALVNRVTGEAIKHSQGEGHPVKLVPYNPGYQDESVLWTESRDVGHGFRCIRMVNNIYLNFDALHGDKDHGGVRDGTTVALWKWCEGDNQRWKIVPW</sequence>
<evidence type="ECO:0000250" key="1">
    <source>
        <dbReference type="UniProtKB" id="Q945P1"/>
    </source>
</evidence>
<evidence type="ECO:0000255" key="2">
    <source>
        <dbReference type="PROSITE-ProRule" id="PRU00174"/>
    </source>
</evidence>
<evidence type="ECO:0000256" key="3">
    <source>
        <dbReference type="SAM" id="MobiDB-lite"/>
    </source>
</evidence>
<evidence type="ECO:0000269" key="4">
    <source>
    </source>
</evidence>
<evidence type="ECO:0000303" key="5">
    <source>
    </source>
</evidence>
<evidence type="ECO:0000305" key="6"/>
<evidence type="ECO:0000312" key="7">
    <source>
        <dbReference type="EMBL" id="AAN64997.1"/>
    </source>
</evidence>
<evidence type="ECO:0000312" key="8">
    <source>
        <dbReference type="EMBL" id="ABF95725.1"/>
    </source>
</evidence>
<evidence type="ECO:0000312" key="9">
    <source>
        <dbReference type="EMBL" id="BAF11909.1"/>
    </source>
</evidence>
<protein>
    <recommendedName>
        <fullName evidence="6">Ricin B-like lectin R40C1</fullName>
    </recommendedName>
    <alternativeName>
        <fullName evidence="5">Osr40c1</fullName>
    </alternativeName>
</protein>
<dbReference type="EMBL" id="X95402">
    <property type="protein sequence ID" value="CAA64683.1"/>
    <property type="molecule type" value="mRNA"/>
</dbReference>
<dbReference type="EMBL" id="AC126222">
    <property type="protein sequence ID" value="AAN64997.1"/>
    <property type="status" value="ALT_SEQ"/>
    <property type="molecule type" value="Genomic_DNA"/>
</dbReference>
<dbReference type="EMBL" id="DP000009">
    <property type="protein sequence ID" value="ABF95725.1"/>
    <property type="molecule type" value="Genomic_DNA"/>
</dbReference>
<dbReference type="EMBL" id="AP008209">
    <property type="protein sequence ID" value="BAF11909.1"/>
    <property type="molecule type" value="Genomic_DNA"/>
</dbReference>
<dbReference type="EMBL" id="AP014959">
    <property type="protein sequence ID" value="BAS84002.1"/>
    <property type="molecule type" value="Genomic_DNA"/>
</dbReference>
<dbReference type="EMBL" id="AK069815">
    <property type="protein sequence ID" value="BAG91621.1"/>
    <property type="molecule type" value="mRNA"/>
</dbReference>
<dbReference type="PIR" id="T03911">
    <property type="entry name" value="T03911"/>
</dbReference>
<dbReference type="RefSeq" id="XP_015631880.1">
    <property type="nucleotide sequence ID" value="XM_015776394.1"/>
</dbReference>
<dbReference type="SMR" id="Q10M12"/>
<dbReference type="FunCoup" id="Q10M12">
    <property type="interactions" value="2"/>
</dbReference>
<dbReference type="CarbonylDB" id="Q10M12"/>
<dbReference type="PaxDb" id="39947-Q10M12"/>
<dbReference type="EnsemblPlants" id="Os03t0327600-01">
    <property type="protein sequence ID" value="Os03t0327600-01"/>
    <property type="gene ID" value="Os03g0327600"/>
</dbReference>
<dbReference type="Gramene" id="Os03t0327600-01">
    <property type="protein sequence ID" value="Os03t0327600-01"/>
    <property type="gene ID" value="Os03g0327600"/>
</dbReference>
<dbReference type="KEGG" id="dosa:Os03g0327600"/>
<dbReference type="eggNOG" id="ENOG502QTCR">
    <property type="taxonomic scope" value="Eukaryota"/>
</dbReference>
<dbReference type="HOGENOM" id="CLU_039568_0_0_1"/>
<dbReference type="InParanoid" id="Q10M12"/>
<dbReference type="OMA" id="WIKDERY"/>
<dbReference type="OrthoDB" id="7769065at2759"/>
<dbReference type="Proteomes" id="UP000000763">
    <property type="component" value="Chromosome 3"/>
</dbReference>
<dbReference type="Proteomes" id="UP000059680">
    <property type="component" value="Chromosome 3"/>
</dbReference>
<dbReference type="GO" id="GO:0030246">
    <property type="term" value="F:carbohydrate binding"/>
    <property type="evidence" value="ECO:0007669"/>
    <property type="project" value="UniProtKB-KW"/>
</dbReference>
<dbReference type="CDD" id="cd23431">
    <property type="entry name" value="beta-trefoil_Ricin_AtEULS3-like"/>
    <property type="match status" value="2"/>
</dbReference>
<dbReference type="Gene3D" id="2.80.10.50">
    <property type="match status" value="2"/>
</dbReference>
<dbReference type="InterPro" id="IPR040249">
    <property type="entry name" value="Ricin_B-like_lectin_EULS3-like"/>
</dbReference>
<dbReference type="InterPro" id="IPR035992">
    <property type="entry name" value="Ricin_B-like_lectins"/>
</dbReference>
<dbReference type="PANTHER" id="PTHR31257">
    <property type="entry name" value="RICIN B-LIKE LECTIN EULS3"/>
    <property type="match status" value="1"/>
</dbReference>
<dbReference type="PANTHER" id="PTHR31257:SF3">
    <property type="entry name" value="RICIN B-LIKE LECTIN R40C1"/>
    <property type="match status" value="1"/>
</dbReference>
<dbReference type="SUPFAM" id="SSF50370">
    <property type="entry name" value="Ricin B-like lectins"/>
    <property type="match status" value="2"/>
</dbReference>